<feature type="chain" id="PRO_1000200424" description="UPF0246 protein YaaA">
    <location>
        <begin position="1"/>
        <end position="257"/>
    </location>
</feature>
<reference key="1">
    <citation type="journal article" date="2009" name="PLoS ONE">
        <title>Salmonella paratyphi C: genetic divergence from Salmonella choleraesuis and pathogenic convergence with Salmonella typhi.</title>
        <authorList>
            <person name="Liu W.-Q."/>
            <person name="Feng Y."/>
            <person name="Wang Y."/>
            <person name="Zou Q.-H."/>
            <person name="Chen F."/>
            <person name="Guo J.-T."/>
            <person name="Peng Y.-H."/>
            <person name="Jin Y."/>
            <person name="Li Y.-G."/>
            <person name="Hu S.-N."/>
            <person name="Johnston R.N."/>
            <person name="Liu G.-R."/>
            <person name="Liu S.-L."/>
        </authorList>
    </citation>
    <scope>NUCLEOTIDE SEQUENCE [LARGE SCALE GENOMIC DNA]</scope>
    <source>
        <strain>RKS4594</strain>
    </source>
</reference>
<organism>
    <name type="scientific">Salmonella paratyphi C (strain RKS4594)</name>
    <dbReference type="NCBI Taxonomy" id="476213"/>
    <lineage>
        <taxon>Bacteria</taxon>
        <taxon>Pseudomonadati</taxon>
        <taxon>Pseudomonadota</taxon>
        <taxon>Gammaproteobacteria</taxon>
        <taxon>Enterobacterales</taxon>
        <taxon>Enterobacteriaceae</taxon>
        <taxon>Salmonella</taxon>
    </lineage>
</organism>
<dbReference type="EMBL" id="CP000857">
    <property type="protein sequence ID" value="ACN44200.1"/>
    <property type="molecule type" value="Genomic_DNA"/>
</dbReference>
<dbReference type="RefSeq" id="WP_000906175.1">
    <property type="nucleotide sequence ID" value="NC_012125.1"/>
</dbReference>
<dbReference type="SMR" id="C0Q4E5"/>
<dbReference type="KEGG" id="sei:SPC_0005"/>
<dbReference type="HOGENOM" id="CLU_061989_0_0_6"/>
<dbReference type="Proteomes" id="UP000001599">
    <property type="component" value="Chromosome"/>
</dbReference>
<dbReference type="GO" id="GO:0005829">
    <property type="term" value="C:cytosol"/>
    <property type="evidence" value="ECO:0007669"/>
    <property type="project" value="TreeGrafter"/>
</dbReference>
<dbReference type="GO" id="GO:0033194">
    <property type="term" value="P:response to hydroperoxide"/>
    <property type="evidence" value="ECO:0007669"/>
    <property type="project" value="TreeGrafter"/>
</dbReference>
<dbReference type="HAMAP" id="MF_00652">
    <property type="entry name" value="UPF0246"/>
    <property type="match status" value="1"/>
</dbReference>
<dbReference type="InterPro" id="IPR005583">
    <property type="entry name" value="YaaA"/>
</dbReference>
<dbReference type="NCBIfam" id="NF002541">
    <property type="entry name" value="PRK02101.1-1"/>
    <property type="match status" value="1"/>
</dbReference>
<dbReference type="NCBIfam" id="NF002542">
    <property type="entry name" value="PRK02101.1-3"/>
    <property type="match status" value="1"/>
</dbReference>
<dbReference type="PANTHER" id="PTHR30283:SF4">
    <property type="entry name" value="PEROXIDE STRESS RESISTANCE PROTEIN YAAA"/>
    <property type="match status" value="1"/>
</dbReference>
<dbReference type="PANTHER" id="PTHR30283">
    <property type="entry name" value="PEROXIDE STRESS RESPONSE PROTEIN YAAA"/>
    <property type="match status" value="1"/>
</dbReference>
<dbReference type="Pfam" id="PF03883">
    <property type="entry name" value="H2O2_YaaD"/>
    <property type="match status" value="1"/>
</dbReference>
<proteinExistence type="inferred from homology"/>
<protein>
    <recommendedName>
        <fullName evidence="1">UPF0246 protein YaaA</fullName>
    </recommendedName>
</protein>
<name>YAAA_SALPC</name>
<comment type="similarity">
    <text evidence="1">Belongs to the UPF0246 family.</text>
</comment>
<evidence type="ECO:0000255" key="1">
    <source>
        <dbReference type="HAMAP-Rule" id="MF_00652"/>
    </source>
</evidence>
<accession>C0Q4E5</accession>
<sequence>MLILISPAKTLDYQSPLATTRYTQPELLDHSQQLIQQARQLSAPQISRLMGISDKLADLNATRFHDWQPHFTPDNARQAILAFKGDVYTGLQAETFNDADFDFAQQHLRMLSGLYGVLRPLDLMQPYRLEMGIRLENPRGKDLYQFWGDIITDKLNEALEAQGDRVVVNLASEEYFKSVKPKKLNAELIKPVFLDEKNGKFKVVSFYAKKARGLMSRFIIENRLTKPEQLTAFDREGYFFDEETSTQDELVFKRYEQ</sequence>
<gene>
    <name evidence="1" type="primary">yaaA</name>
    <name type="ordered locus">SPC_0005</name>
</gene>